<keyword id="KW-0067">ATP-binding</keyword>
<keyword id="KW-0963">Cytoplasm</keyword>
<keyword id="KW-0460">Magnesium</keyword>
<keyword id="KW-0479">Metal-binding</keyword>
<keyword id="KW-0547">Nucleotide-binding</keyword>
<keyword id="KW-0554">One-carbon metabolism</keyword>
<keyword id="KW-0630">Potassium</keyword>
<keyword id="KW-0808">Transferase</keyword>
<protein>
    <recommendedName>
        <fullName evidence="1">S-adenosylmethionine synthase</fullName>
        <shortName evidence="1">AdoMet synthase</shortName>
        <ecNumber evidence="1">2.5.1.6</ecNumber>
    </recommendedName>
    <alternativeName>
        <fullName evidence="1">MAT</fullName>
    </alternativeName>
    <alternativeName>
        <fullName evidence="1">Methionine adenosyltransferase</fullName>
    </alternativeName>
</protein>
<proteinExistence type="inferred from homology"/>
<gene>
    <name evidence="1" type="primary">metK</name>
    <name type="ordered locus">NT01EI_3376</name>
</gene>
<sequence>MAKHLFTSESVSEGHPDKIADQISDAVLDAILEQDPKARVACETYVKTGMVLVGGEITTNAWVDIEELTRKTVADIGYVSSDMGFDANSCAVLSAIGKQSPDINQGVDRCDPLEQGAGDQGIMFGYATNETDVLMPAPITYAHRLMERQARVRKNGTLPWLRPDAKSQVTFQYDDGKIAGIDAVVLSTQHADTISQKDLQEAVMEEIIKPVLPAEWLSASTKYFINPTGRFVIGGPMGDCGLTGRKIIVDTYGGAARHGGGAFSGKDPSKVDRSAAYAARYVAKNIVAAGLADRCEIQVSYAIGVAEPTSIMIETFGTEKIDQEHLIQLVREFFDLRPYGLIQMLDLIQPIYRQTAAYGHFGREQFPWEKTDKAALLREAAGLK</sequence>
<organism>
    <name type="scientific">Edwardsiella ictaluri (strain 93-146)</name>
    <dbReference type="NCBI Taxonomy" id="634503"/>
    <lineage>
        <taxon>Bacteria</taxon>
        <taxon>Pseudomonadati</taxon>
        <taxon>Pseudomonadota</taxon>
        <taxon>Gammaproteobacteria</taxon>
        <taxon>Enterobacterales</taxon>
        <taxon>Hafniaceae</taxon>
        <taxon>Edwardsiella</taxon>
    </lineage>
</organism>
<evidence type="ECO:0000255" key="1">
    <source>
        <dbReference type="HAMAP-Rule" id="MF_00086"/>
    </source>
</evidence>
<dbReference type="EC" id="2.5.1.6" evidence="1"/>
<dbReference type="EMBL" id="CP001600">
    <property type="protein sequence ID" value="ACR70513.1"/>
    <property type="molecule type" value="Genomic_DNA"/>
</dbReference>
<dbReference type="RefSeq" id="WP_015872586.1">
    <property type="nucleotide sequence ID" value="NZ_CP169062.1"/>
</dbReference>
<dbReference type="SMR" id="C5BAV4"/>
<dbReference type="STRING" id="67780.B6E78_08565"/>
<dbReference type="GeneID" id="69540229"/>
<dbReference type="KEGG" id="eic:NT01EI_3376"/>
<dbReference type="PATRIC" id="fig|634503.3.peg.3001"/>
<dbReference type="HOGENOM" id="CLU_041802_1_1_6"/>
<dbReference type="OrthoDB" id="9801686at2"/>
<dbReference type="UniPathway" id="UPA00315">
    <property type="reaction ID" value="UER00080"/>
</dbReference>
<dbReference type="Proteomes" id="UP000001485">
    <property type="component" value="Chromosome"/>
</dbReference>
<dbReference type="GO" id="GO:0005737">
    <property type="term" value="C:cytoplasm"/>
    <property type="evidence" value="ECO:0007669"/>
    <property type="project" value="UniProtKB-SubCell"/>
</dbReference>
<dbReference type="GO" id="GO:0005524">
    <property type="term" value="F:ATP binding"/>
    <property type="evidence" value="ECO:0007669"/>
    <property type="project" value="UniProtKB-UniRule"/>
</dbReference>
<dbReference type="GO" id="GO:0000287">
    <property type="term" value="F:magnesium ion binding"/>
    <property type="evidence" value="ECO:0007669"/>
    <property type="project" value="UniProtKB-UniRule"/>
</dbReference>
<dbReference type="GO" id="GO:0004478">
    <property type="term" value="F:methionine adenosyltransferase activity"/>
    <property type="evidence" value="ECO:0007669"/>
    <property type="project" value="UniProtKB-UniRule"/>
</dbReference>
<dbReference type="GO" id="GO:0006730">
    <property type="term" value="P:one-carbon metabolic process"/>
    <property type="evidence" value="ECO:0007669"/>
    <property type="project" value="UniProtKB-KW"/>
</dbReference>
<dbReference type="GO" id="GO:0006556">
    <property type="term" value="P:S-adenosylmethionine biosynthetic process"/>
    <property type="evidence" value="ECO:0007669"/>
    <property type="project" value="UniProtKB-UniRule"/>
</dbReference>
<dbReference type="CDD" id="cd18079">
    <property type="entry name" value="S-AdoMet_synt"/>
    <property type="match status" value="1"/>
</dbReference>
<dbReference type="FunFam" id="3.30.300.10:FF:000003">
    <property type="entry name" value="S-adenosylmethionine synthase"/>
    <property type="match status" value="1"/>
</dbReference>
<dbReference type="FunFam" id="3.30.300.10:FF:000004">
    <property type="entry name" value="S-adenosylmethionine synthase"/>
    <property type="match status" value="1"/>
</dbReference>
<dbReference type="Gene3D" id="3.30.300.10">
    <property type="match status" value="3"/>
</dbReference>
<dbReference type="HAMAP" id="MF_00086">
    <property type="entry name" value="S_AdoMet_synth1"/>
    <property type="match status" value="1"/>
</dbReference>
<dbReference type="InterPro" id="IPR022631">
    <property type="entry name" value="ADOMET_SYNTHASE_CS"/>
</dbReference>
<dbReference type="InterPro" id="IPR022630">
    <property type="entry name" value="S-AdoMet_synt_C"/>
</dbReference>
<dbReference type="InterPro" id="IPR022629">
    <property type="entry name" value="S-AdoMet_synt_central"/>
</dbReference>
<dbReference type="InterPro" id="IPR022628">
    <property type="entry name" value="S-AdoMet_synt_N"/>
</dbReference>
<dbReference type="InterPro" id="IPR002133">
    <property type="entry name" value="S-AdoMet_synthetase"/>
</dbReference>
<dbReference type="InterPro" id="IPR022636">
    <property type="entry name" value="S-AdoMet_synthetase_sfam"/>
</dbReference>
<dbReference type="NCBIfam" id="TIGR01034">
    <property type="entry name" value="metK"/>
    <property type="match status" value="1"/>
</dbReference>
<dbReference type="PANTHER" id="PTHR11964">
    <property type="entry name" value="S-ADENOSYLMETHIONINE SYNTHETASE"/>
    <property type="match status" value="1"/>
</dbReference>
<dbReference type="Pfam" id="PF02773">
    <property type="entry name" value="S-AdoMet_synt_C"/>
    <property type="match status" value="1"/>
</dbReference>
<dbReference type="Pfam" id="PF02772">
    <property type="entry name" value="S-AdoMet_synt_M"/>
    <property type="match status" value="1"/>
</dbReference>
<dbReference type="Pfam" id="PF00438">
    <property type="entry name" value="S-AdoMet_synt_N"/>
    <property type="match status" value="1"/>
</dbReference>
<dbReference type="PIRSF" id="PIRSF000497">
    <property type="entry name" value="MAT"/>
    <property type="match status" value="1"/>
</dbReference>
<dbReference type="SUPFAM" id="SSF55973">
    <property type="entry name" value="S-adenosylmethionine synthetase"/>
    <property type="match status" value="3"/>
</dbReference>
<dbReference type="PROSITE" id="PS00376">
    <property type="entry name" value="ADOMET_SYNTHASE_1"/>
    <property type="match status" value="1"/>
</dbReference>
<dbReference type="PROSITE" id="PS00377">
    <property type="entry name" value="ADOMET_SYNTHASE_2"/>
    <property type="match status" value="1"/>
</dbReference>
<reference key="1">
    <citation type="submission" date="2009-03" db="EMBL/GenBank/DDBJ databases">
        <title>Complete genome sequence of Edwardsiella ictaluri 93-146.</title>
        <authorList>
            <person name="Williams M.L."/>
            <person name="Gillaspy A.F."/>
            <person name="Dyer D.W."/>
            <person name="Thune R.L."/>
            <person name="Waldbieser G.C."/>
            <person name="Schuster S.C."/>
            <person name="Gipson J."/>
            <person name="Zaitshik J."/>
            <person name="Landry C."/>
            <person name="Lawrence M.L."/>
        </authorList>
    </citation>
    <scope>NUCLEOTIDE SEQUENCE [LARGE SCALE GENOMIC DNA]</scope>
    <source>
        <strain>93-146</strain>
    </source>
</reference>
<feature type="chain" id="PRO_1000202617" description="S-adenosylmethionine synthase">
    <location>
        <begin position="1"/>
        <end position="384"/>
    </location>
</feature>
<feature type="region of interest" description="Flexible loop" evidence="1">
    <location>
        <begin position="99"/>
        <end position="109"/>
    </location>
</feature>
<feature type="binding site" description="in other chain" evidence="1">
    <location>
        <position position="15"/>
    </location>
    <ligand>
        <name>ATP</name>
        <dbReference type="ChEBI" id="CHEBI:30616"/>
        <note>ligand shared between two neighboring subunits</note>
    </ligand>
</feature>
<feature type="binding site" evidence="1">
    <location>
        <position position="17"/>
    </location>
    <ligand>
        <name>Mg(2+)</name>
        <dbReference type="ChEBI" id="CHEBI:18420"/>
    </ligand>
</feature>
<feature type="binding site" evidence="1">
    <location>
        <position position="43"/>
    </location>
    <ligand>
        <name>K(+)</name>
        <dbReference type="ChEBI" id="CHEBI:29103"/>
    </ligand>
</feature>
<feature type="binding site" description="in other chain" evidence="1">
    <location>
        <position position="56"/>
    </location>
    <ligand>
        <name>L-methionine</name>
        <dbReference type="ChEBI" id="CHEBI:57844"/>
        <note>ligand shared between two neighboring subunits</note>
    </ligand>
</feature>
<feature type="binding site" description="in other chain" evidence="1">
    <location>
        <position position="99"/>
    </location>
    <ligand>
        <name>L-methionine</name>
        <dbReference type="ChEBI" id="CHEBI:57844"/>
        <note>ligand shared between two neighboring subunits</note>
    </ligand>
</feature>
<feature type="binding site" description="in other chain" evidence="1">
    <location>
        <begin position="164"/>
        <end position="166"/>
    </location>
    <ligand>
        <name>ATP</name>
        <dbReference type="ChEBI" id="CHEBI:30616"/>
        <note>ligand shared between two neighboring subunits</note>
    </ligand>
</feature>
<feature type="binding site" description="in other chain" evidence="1">
    <location>
        <begin position="230"/>
        <end position="231"/>
    </location>
    <ligand>
        <name>ATP</name>
        <dbReference type="ChEBI" id="CHEBI:30616"/>
        <note>ligand shared between two neighboring subunits</note>
    </ligand>
</feature>
<feature type="binding site" evidence="1">
    <location>
        <position position="239"/>
    </location>
    <ligand>
        <name>ATP</name>
        <dbReference type="ChEBI" id="CHEBI:30616"/>
        <note>ligand shared between two neighboring subunits</note>
    </ligand>
</feature>
<feature type="binding site" evidence="1">
    <location>
        <position position="239"/>
    </location>
    <ligand>
        <name>L-methionine</name>
        <dbReference type="ChEBI" id="CHEBI:57844"/>
        <note>ligand shared between two neighboring subunits</note>
    </ligand>
</feature>
<feature type="binding site" description="in other chain" evidence="1">
    <location>
        <begin position="245"/>
        <end position="246"/>
    </location>
    <ligand>
        <name>ATP</name>
        <dbReference type="ChEBI" id="CHEBI:30616"/>
        <note>ligand shared between two neighboring subunits</note>
    </ligand>
</feature>
<feature type="binding site" evidence="1">
    <location>
        <position position="262"/>
    </location>
    <ligand>
        <name>ATP</name>
        <dbReference type="ChEBI" id="CHEBI:30616"/>
        <note>ligand shared between two neighboring subunits</note>
    </ligand>
</feature>
<feature type="binding site" evidence="1">
    <location>
        <position position="266"/>
    </location>
    <ligand>
        <name>ATP</name>
        <dbReference type="ChEBI" id="CHEBI:30616"/>
        <note>ligand shared between two neighboring subunits</note>
    </ligand>
</feature>
<feature type="binding site" description="in other chain" evidence="1">
    <location>
        <position position="270"/>
    </location>
    <ligand>
        <name>L-methionine</name>
        <dbReference type="ChEBI" id="CHEBI:57844"/>
        <note>ligand shared between two neighboring subunits</note>
    </ligand>
</feature>
<name>METK_EDWI9</name>
<comment type="function">
    <text evidence="1">Catalyzes the formation of S-adenosylmethionine (AdoMet) from methionine and ATP. The overall synthetic reaction is composed of two sequential steps, AdoMet formation and the subsequent tripolyphosphate hydrolysis which occurs prior to release of AdoMet from the enzyme.</text>
</comment>
<comment type="catalytic activity">
    <reaction evidence="1">
        <text>L-methionine + ATP + H2O = S-adenosyl-L-methionine + phosphate + diphosphate</text>
        <dbReference type="Rhea" id="RHEA:21080"/>
        <dbReference type="ChEBI" id="CHEBI:15377"/>
        <dbReference type="ChEBI" id="CHEBI:30616"/>
        <dbReference type="ChEBI" id="CHEBI:33019"/>
        <dbReference type="ChEBI" id="CHEBI:43474"/>
        <dbReference type="ChEBI" id="CHEBI:57844"/>
        <dbReference type="ChEBI" id="CHEBI:59789"/>
        <dbReference type="EC" id="2.5.1.6"/>
    </reaction>
</comment>
<comment type="cofactor">
    <cofactor evidence="1">
        <name>Mg(2+)</name>
        <dbReference type="ChEBI" id="CHEBI:18420"/>
    </cofactor>
    <text evidence="1">Binds 2 divalent ions per subunit.</text>
</comment>
<comment type="cofactor">
    <cofactor evidence="1">
        <name>K(+)</name>
        <dbReference type="ChEBI" id="CHEBI:29103"/>
    </cofactor>
    <text evidence="1">Binds 1 potassium ion per subunit.</text>
</comment>
<comment type="pathway">
    <text evidence="1">Amino-acid biosynthesis; S-adenosyl-L-methionine biosynthesis; S-adenosyl-L-methionine from L-methionine: step 1/1.</text>
</comment>
<comment type="subunit">
    <text evidence="1">Homotetramer; dimer of dimers.</text>
</comment>
<comment type="subcellular location">
    <subcellularLocation>
        <location evidence="1">Cytoplasm</location>
    </subcellularLocation>
</comment>
<comment type="similarity">
    <text evidence="1">Belongs to the AdoMet synthase family.</text>
</comment>
<accession>C5BAV4</accession>